<proteinExistence type="inferred from homology"/>
<organism>
    <name type="scientific">Prochlorococcus marinus (strain MIT 9515)</name>
    <dbReference type="NCBI Taxonomy" id="167542"/>
    <lineage>
        <taxon>Bacteria</taxon>
        <taxon>Bacillati</taxon>
        <taxon>Cyanobacteriota</taxon>
        <taxon>Cyanophyceae</taxon>
        <taxon>Synechococcales</taxon>
        <taxon>Prochlorococcaceae</taxon>
        <taxon>Prochlorococcus</taxon>
    </lineage>
</organism>
<dbReference type="EC" id="1.97.1.12" evidence="1"/>
<dbReference type="EMBL" id="CP000552">
    <property type="protein sequence ID" value="ABM72910.1"/>
    <property type="molecule type" value="Genomic_DNA"/>
</dbReference>
<dbReference type="RefSeq" id="WP_011821002.1">
    <property type="nucleotide sequence ID" value="NC_008817.1"/>
</dbReference>
<dbReference type="SMR" id="A2BYP9"/>
<dbReference type="STRING" id="167542.P9515_17031"/>
<dbReference type="GeneID" id="60200996"/>
<dbReference type="KEGG" id="pmc:P9515_17031"/>
<dbReference type="eggNOG" id="COG2885">
    <property type="taxonomic scope" value="Bacteria"/>
</dbReference>
<dbReference type="HOGENOM" id="CLU_016126_1_0_3"/>
<dbReference type="OrthoDB" id="499313at2"/>
<dbReference type="Proteomes" id="UP000001589">
    <property type="component" value="Chromosome"/>
</dbReference>
<dbReference type="GO" id="GO:0009522">
    <property type="term" value="C:photosystem I"/>
    <property type="evidence" value="ECO:0007669"/>
    <property type="project" value="UniProtKB-KW"/>
</dbReference>
<dbReference type="GO" id="GO:0031676">
    <property type="term" value="C:plasma membrane-derived thylakoid membrane"/>
    <property type="evidence" value="ECO:0007669"/>
    <property type="project" value="UniProtKB-SubCell"/>
</dbReference>
<dbReference type="GO" id="GO:0051539">
    <property type="term" value="F:4 iron, 4 sulfur cluster binding"/>
    <property type="evidence" value="ECO:0007669"/>
    <property type="project" value="UniProtKB-KW"/>
</dbReference>
<dbReference type="GO" id="GO:0016168">
    <property type="term" value="F:chlorophyll binding"/>
    <property type="evidence" value="ECO:0007669"/>
    <property type="project" value="UniProtKB-KW"/>
</dbReference>
<dbReference type="GO" id="GO:0009055">
    <property type="term" value="F:electron transfer activity"/>
    <property type="evidence" value="ECO:0007669"/>
    <property type="project" value="UniProtKB-UniRule"/>
</dbReference>
<dbReference type="GO" id="GO:0000287">
    <property type="term" value="F:magnesium ion binding"/>
    <property type="evidence" value="ECO:0007669"/>
    <property type="project" value="UniProtKB-UniRule"/>
</dbReference>
<dbReference type="GO" id="GO:0016491">
    <property type="term" value="F:oxidoreductase activity"/>
    <property type="evidence" value="ECO:0007669"/>
    <property type="project" value="UniProtKB-KW"/>
</dbReference>
<dbReference type="GO" id="GO:0015979">
    <property type="term" value="P:photosynthesis"/>
    <property type="evidence" value="ECO:0007669"/>
    <property type="project" value="UniProtKB-UniRule"/>
</dbReference>
<dbReference type="Gene3D" id="1.20.1130.10">
    <property type="entry name" value="Photosystem I PsaA/PsaB"/>
    <property type="match status" value="1"/>
</dbReference>
<dbReference type="HAMAP" id="MF_00458">
    <property type="entry name" value="PSI_PsaA"/>
    <property type="match status" value="1"/>
</dbReference>
<dbReference type="InterPro" id="IPR006243">
    <property type="entry name" value="PSI_PsaA"/>
</dbReference>
<dbReference type="InterPro" id="IPR001280">
    <property type="entry name" value="PSI_PsaA/B"/>
</dbReference>
<dbReference type="InterPro" id="IPR020586">
    <property type="entry name" value="PSI_PsaA/B_CS"/>
</dbReference>
<dbReference type="InterPro" id="IPR036408">
    <property type="entry name" value="PSI_PsaA/B_sf"/>
</dbReference>
<dbReference type="NCBIfam" id="TIGR01335">
    <property type="entry name" value="psaA"/>
    <property type="match status" value="1"/>
</dbReference>
<dbReference type="PANTHER" id="PTHR30128">
    <property type="entry name" value="OUTER MEMBRANE PROTEIN, OMPA-RELATED"/>
    <property type="match status" value="1"/>
</dbReference>
<dbReference type="PANTHER" id="PTHR30128:SF19">
    <property type="entry name" value="PHOTOSYSTEM I P700 CHLOROPHYLL A APOPROTEIN A1-RELATED"/>
    <property type="match status" value="1"/>
</dbReference>
<dbReference type="Pfam" id="PF00223">
    <property type="entry name" value="PsaA_PsaB"/>
    <property type="match status" value="1"/>
</dbReference>
<dbReference type="PIRSF" id="PIRSF002905">
    <property type="entry name" value="PSI_A"/>
    <property type="match status" value="1"/>
</dbReference>
<dbReference type="PRINTS" id="PR00257">
    <property type="entry name" value="PHOTSYSPSAAB"/>
</dbReference>
<dbReference type="SUPFAM" id="SSF81558">
    <property type="entry name" value="Photosystem I subunits PsaA/PsaB"/>
    <property type="match status" value="1"/>
</dbReference>
<dbReference type="PROSITE" id="PS00419">
    <property type="entry name" value="PHOTOSYSTEM_I_PSAAB"/>
    <property type="match status" value="1"/>
</dbReference>
<keyword id="KW-0004">4Fe-4S</keyword>
<keyword id="KW-0148">Chlorophyll</keyword>
<keyword id="KW-0157">Chromophore</keyword>
<keyword id="KW-0249">Electron transport</keyword>
<keyword id="KW-0408">Iron</keyword>
<keyword id="KW-0411">Iron-sulfur</keyword>
<keyword id="KW-0460">Magnesium</keyword>
<keyword id="KW-0472">Membrane</keyword>
<keyword id="KW-0479">Metal-binding</keyword>
<keyword id="KW-0560">Oxidoreductase</keyword>
<keyword id="KW-0602">Photosynthesis</keyword>
<keyword id="KW-0603">Photosystem I</keyword>
<keyword id="KW-0793">Thylakoid</keyword>
<keyword id="KW-0812">Transmembrane</keyword>
<keyword id="KW-1133">Transmembrane helix</keyword>
<keyword id="KW-0813">Transport</keyword>
<reference key="1">
    <citation type="journal article" date="2007" name="PLoS Genet.">
        <title>Patterns and implications of gene gain and loss in the evolution of Prochlorococcus.</title>
        <authorList>
            <person name="Kettler G.C."/>
            <person name="Martiny A.C."/>
            <person name="Huang K."/>
            <person name="Zucker J."/>
            <person name="Coleman M.L."/>
            <person name="Rodrigue S."/>
            <person name="Chen F."/>
            <person name="Lapidus A."/>
            <person name="Ferriera S."/>
            <person name="Johnson J."/>
            <person name="Steglich C."/>
            <person name="Church G.M."/>
            <person name="Richardson P."/>
            <person name="Chisholm S.W."/>
        </authorList>
    </citation>
    <scope>NUCLEOTIDE SEQUENCE [LARGE SCALE GENOMIC DNA]</scope>
    <source>
        <strain>MIT 9515</strain>
    </source>
</reference>
<protein>
    <recommendedName>
        <fullName evidence="1">Photosystem I P700 chlorophyll a apoprotein A1</fullName>
        <ecNumber evidence="1">1.97.1.12</ecNumber>
    </recommendedName>
    <alternativeName>
        <fullName evidence="1">PsaA</fullName>
    </alternativeName>
</protein>
<name>PSAA_PROM5</name>
<sequence>MTISPPESGEKDKKILESPVKADPRPIDFAKLDKPGFWSSKLSKGPKTTTWIWNLHADAHDFDVHTGDAEEATRKIFSAHFGHLAVIFIWMSAAFFHGARFSNYSGWLADPTHVKPGAQQVWAIVGQEMLNGDLGANYNGIQISSGVFHMWRAWGITNESELMALAIGAVVMAALMLHAGIFHYHKAAPKMEWFQDVESMMNHHLAGLLGLGSLAWAGHTIHIGAPTAALLDAIDAGSPLIINGKEIATIADIPMPHQLCDPQIVGQIFPGLASGTGNFFSLNWFAFSDFLTFKGGLNPVTGSLWMTDIAHHHLAIAVLFIIAGHMYRTNYGIGHSMKEILDAHQGDPILFPAPRGHQGLFDFMAESRHAQLSVNLALLGSLSIIISHHMYAMPPYPYIATDYMTVLGLFTHHMWIGGLFIVGAGAHAGIAMVRDYDPAKHIDNVLDRVLKARDALISHLNWVCMWLGFHSFGLYIHNDTMRALGRPQDMFSDKAIQLQPIFAQWIQNIQSSGVGTTLLEGNGVSQVFNGETISVGGKVAMTGIPLGTADLMIHHIHAFQIHVTVLILLKGVLYARSSRLIPDKASLGFRFPCDGPGRGGTCQVSSWDHVFLALFWMYNCLSIVIFHFSWKMQSDVWGLTGGNFAQSAITINGWLRDFLWAQAAQVLTSYGQSISMYGLMFLGAHFIWAFSLMFLFSGRGYWQELFESIVWAHNKLKVAPTIQPRALSITQGRAVGVTHFLVGGIATTWAFFHARLFGIG</sequence>
<comment type="function">
    <text evidence="1">PsaA and PsaB bind P700, the primary electron donor of photosystem I (PSI), as well as the electron acceptors A0, A1 and FX. PSI is a plastocyanin/cytochrome c6-ferredoxin oxidoreductase, converting photonic excitation into a charge separation, which transfers an electron from the donor P700 chlorophyll pair to the spectroscopically characterized acceptors A0, A1, FX, FA and FB in turn. Oxidized P700 is reduced on the lumenal side of the thylakoid membrane by plastocyanin or cytochrome c6.</text>
</comment>
<comment type="catalytic activity">
    <reaction evidence="1">
        <text>reduced [plastocyanin] + hnu + oxidized [2Fe-2S]-[ferredoxin] = oxidized [plastocyanin] + reduced [2Fe-2S]-[ferredoxin]</text>
        <dbReference type="Rhea" id="RHEA:30407"/>
        <dbReference type="Rhea" id="RHEA-COMP:10000"/>
        <dbReference type="Rhea" id="RHEA-COMP:10001"/>
        <dbReference type="Rhea" id="RHEA-COMP:10039"/>
        <dbReference type="Rhea" id="RHEA-COMP:10040"/>
        <dbReference type="ChEBI" id="CHEBI:29036"/>
        <dbReference type="ChEBI" id="CHEBI:30212"/>
        <dbReference type="ChEBI" id="CHEBI:33737"/>
        <dbReference type="ChEBI" id="CHEBI:33738"/>
        <dbReference type="ChEBI" id="CHEBI:49552"/>
        <dbReference type="EC" id="1.97.1.12"/>
    </reaction>
</comment>
<comment type="cofactor">
    <text evidence="1">PSI electron transfer chain: 5 divinyl chlorophyll a, 1 divinyl chlorophyll a', 2 phylloquinones and 3 4Fe-4S clusters. PSI core antenna: 90 divinyl chlorophyll a, 22 carotenoids, 3 phospholipids and 1 galactolipid. P700 is a divinyl chlorophyll a/divinyl chlorophyll a' dimer, A0 is one or more divinyl chlorophyll a, A1 is one or both phylloquinones and FX is a shared 4Fe-4S iron-sulfur center.</text>
</comment>
<comment type="subunit">
    <text evidence="1">The PsaA/B heterodimer binds the P700 divinyl chlorophyll special pair and subsequent electron acceptors. PSI consists of a core antenna complex that captures photons, and an electron transfer chain that converts photonic excitation into a charge separation. The cyanobacterial PSI reaction center is composed of one copy each of PsaA,B,C,D,E,F,I,J,K,L,M and X, and forms trimeric complexes.</text>
</comment>
<comment type="subcellular location">
    <subcellularLocation>
        <location evidence="1">Cellular thylakoid membrane</location>
        <topology evidence="1">Multi-pass membrane protein</topology>
    </subcellularLocation>
</comment>
<comment type="similarity">
    <text evidence="1">Belongs to the PsaA/PsaB family.</text>
</comment>
<accession>A2BYP9</accession>
<gene>
    <name evidence="1" type="primary">psaA</name>
    <name type="ordered locus">P9515_17031</name>
</gene>
<evidence type="ECO:0000255" key="1">
    <source>
        <dbReference type="HAMAP-Rule" id="MF_00458"/>
    </source>
</evidence>
<evidence type="ECO:0000256" key="2">
    <source>
        <dbReference type="SAM" id="MobiDB-lite"/>
    </source>
</evidence>
<feature type="chain" id="PRO_0000294203" description="Photosystem I P700 chlorophyll a apoprotein A1">
    <location>
        <begin position="1"/>
        <end position="760"/>
    </location>
</feature>
<feature type="transmembrane region" description="Helical; Name=I" evidence="1">
    <location>
        <begin position="76"/>
        <end position="99"/>
    </location>
</feature>
<feature type="transmembrane region" description="Helical; Name=II" evidence="1">
    <location>
        <begin position="162"/>
        <end position="185"/>
    </location>
</feature>
<feature type="transmembrane region" description="Helical; Name=III" evidence="1">
    <location>
        <begin position="201"/>
        <end position="225"/>
    </location>
</feature>
<feature type="transmembrane region" description="Helical; Name=IV" evidence="1">
    <location>
        <begin position="309"/>
        <end position="327"/>
    </location>
</feature>
<feature type="transmembrane region" description="Helical; Name=V" evidence="1">
    <location>
        <begin position="368"/>
        <end position="391"/>
    </location>
</feature>
<feature type="transmembrane region" description="Helical; Name=VI" evidence="1">
    <location>
        <begin position="407"/>
        <end position="433"/>
    </location>
</feature>
<feature type="transmembrane region" description="Helical; Name=VII" evidence="1">
    <location>
        <begin position="455"/>
        <end position="477"/>
    </location>
</feature>
<feature type="transmembrane region" description="Helical; Name=VIII" evidence="1">
    <location>
        <begin position="551"/>
        <end position="569"/>
    </location>
</feature>
<feature type="transmembrane region" description="Helical; Name=IX" evidence="1">
    <location>
        <begin position="609"/>
        <end position="630"/>
    </location>
</feature>
<feature type="transmembrane region" description="Helical; Name=X" evidence="1">
    <location>
        <begin position="674"/>
        <end position="696"/>
    </location>
</feature>
<feature type="transmembrane region" description="Helical; Name=XI" evidence="1">
    <location>
        <begin position="734"/>
        <end position="754"/>
    </location>
</feature>
<feature type="region of interest" description="Disordered" evidence="2">
    <location>
        <begin position="1"/>
        <end position="22"/>
    </location>
</feature>
<feature type="compositionally biased region" description="Basic and acidic residues" evidence="2">
    <location>
        <begin position="8"/>
        <end position="22"/>
    </location>
</feature>
<feature type="binding site" evidence="1">
    <location>
        <position position="593"/>
    </location>
    <ligand>
        <name>[4Fe-4S] cluster</name>
        <dbReference type="ChEBI" id="CHEBI:49883"/>
        <note>ligand shared between dimeric partners</note>
    </ligand>
</feature>
<feature type="binding site" evidence="1">
    <location>
        <position position="602"/>
    </location>
    <ligand>
        <name>[4Fe-4S] cluster</name>
        <dbReference type="ChEBI" id="CHEBI:49883"/>
        <note>ligand shared between dimeric partners</note>
    </ligand>
</feature>
<feature type="binding site" description="axial binding residue" evidence="1">
    <location>
        <position position="685"/>
    </location>
    <ligand>
        <name>divinylchlorophyll a'</name>
        <dbReference type="ChEBI" id="CHEBI:189420"/>
        <label>A1</label>
    </ligand>
    <ligandPart>
        <name>Mg</name>
        <dbReference type="ChEBI" id="CHEBI:25107"/>
    </ligandPart>
</feature>
<feature type="binding site" description="axial binding residue" evidence="1">
    <location>
        <position position="693"/>
    </location>
    <ligand>
        <name>divinyl chlorophyll a</name>
        <dbReference type="ChEBI" id="CHEBI:73095"/>
        <label>A3</label>
    </ligand>
    <ligandPart>
        <name>Mg</name>
        <dbReference type="ChEBI" id="CHEBI:25107"/>
    </ligandPart>
</feature>
<feature type="binding site" evidence="1">
    <location>
        <position position="701"/>
    </location>
    <ligand>
        <name>divinyl chlorophyll a</name>
        <dbReference type="ChEBI" id="CHEBI:73095"/>
        <label>A3</label>
    </ligand>
</feature>
<feature type="binding site" evidence="1">
    <location>
        <position position="702"/>
    </location>
    <ligand>
        <name>phylloquinone</name>
        <dbReference type="ChEBI" id="CHEBI:18067"/>
        <label>A</label>
    </ligand>
</feature>